<organism>
    <name type="scientific">Enterobacteria phage T4</name>
    <name type="common">Bacteriophage T4</name>
    <dbReference type="NCBI Taxonomy" id="10665"/>
    <lineage>
        <taxon>Viruses</taxon>
        <taxon>Duplodnaviria</taxon>
        <taxon>Heunggongvirae</taxon>
        <taxon>Uroviricota</taxon>
        <taxon>Caudoviricetes</taxon>
        <taxon>Straboviridae</taxon>
        <taxon>Tevenvirinae</taxon>
        <taxon>Tequatrovirus</taxon>
    </lineage>
</organism>
<sequence>MTIQIKNAINSYAYDKVVSLLEKGDIVTPQILDKWEKELHQTMKQNDQKIGRNTVRELLVQYILSEFDVKAFGVESKAYQKHEISDKTIRRMKNQRKKKFADLKITKV</sequence>
<proteinExistence type="predicted"/>
<feature type="chain" id="PRO_0000165105" description="Uncharacterized 12.7 kDa protein in Gp55-nrdG intergenic region">
    <location>
        <begin position="1"/>
        <end position="108"/>
    </location>
</feature>
<reference key="1">
    <citation type="journal article" date="1987" name="Nucleic Acids Res.">
        <title>Nucleotide sequence and primary structures of gene products coded for by the T4 genome between map positions 48.266 kb and 39.166 kb.</title>
        <authorList>
            <person name="Tomaschewski J."/>
            <person name="Rueger W."/>
        </authorList>
    </citation>
    <scope>NUCLEOTIDE SEQUENCE [GENOMIC DNA]</scope>
    <source>
        <strain>C</strain>
    </source>
</reference>
<reference key="2">
    <citation type="journal article" date="2003" name="Microbiol. Mol. Biol. Rev.">
        <title>Bacteriophage T4 genome.</title>
        <authorList>
            <person name="Miller E.S."/>
            <person name="Kutter E."/>
            <person name="Mosig G."/>
            <person name="Arisaka F."/>
            <person name="Kunisawa T."/>
            <person name="Ruger W."/>
        </authorList>
    </citation>
    <scope>NUCLEOTIDE SEQUENCE [LARGE SCALE GENOMIC DNA]</scope>
</reference>
<gene>
    <name type="primary">y04B</name>
    <name type="synonym">55.2</name>
</gene>
<organismHost>
    <name type="scientific">Escherichia coli</name>
    <dbReference type="NCBI Taxonomy" id="562"/>
</organismHost>
<protein>
    <recommendedName>
        <fullName>Uncharacterized 12.7 kDa protein in Gp55-nrdG intergenic region</fullName>
    </recommendedName>
</protein>
<keyword id="KW-1185">Reference proteome</keyword>
<accession>P07082</accession>
<dbReference type="EMBL" id="Y00122">
    <property type="protein sequence ID" value="CAA68319.1"/>
    <property type="molecule type" value="Genomic_DNA"/>
</dbReference>
<dbReference type="EMBL" id="AF158101">
    <property type="protein sequence ID" value="AAD42493.1"/>
    <property type="molecule type" value="Genomic_DNA"/>
</dbReference>
<dbReference type="PIR" id="E30292">
    <property type="entry name" value="ZFBPT9"/>
</dbReference>
<dbReference type="RefSeq" id="NP_049681.1">
    <property type="nucleotide sequence ID" value="NC_000866.4"/>
</dbReference>
<dbReference type="SMR" id="P07082"/>
<dbReference type="GeneID" id="1258748"/>
<dbReference type="KEGG" id="vg:1258748"/>
<dbReference type="OrthoDB" id="17796at10239"/>
<dbReference type="Proteomes" id="UP000009087">
    <property type="component" value="Segment"/>
</dbReference>
<dbReference type="InterPro" id="IPR055992">
    <property type="entry name" value="DUF7570"/>
</dbReference>
<dbReference type="InterPro" id="IPR016409">
    <property type="entry name" value="Phage_T4_Gp55.2"/>
</dbReference>
<dbReference type="Pfam" id="PF24454">
    <property type="entry name" value="DUF7570"/>
    <property type="match status" value="1"/>
</dbReference>
<dbReference type="PIRSF" id="PIRSF004270">
    <property type="entry name" value="UCP004270"/>
    <property type="match status" value="1"/>
</dbReference>
<name>Y04B_BPT4</name>